<keyword id="KW-0068">Autocatalytic cleavage</keyword>
<keyword id="KW-0210">Decarboxylase</keyword>
<keyword id="KW-0456">Lyase</keyword>
<keyword id="KW-0620">Polyamine biosynthesis</keyword>
<keyword id="KW-0670">Pyruvate</keyword>
<keyword id="KW-1185">Reference proteome</keyword>
<keyword id="KW-0949">S-adenosyl-L-methionine</keyword>
<keyword id="KW-0704">Schiff base</keyword>
<keyword id="KW-0745">Spermidine biosynthesis</keyword>
<keyword id="KW-0865">Zymogen</keyword>
<dbReference type="EC" id="4.1.1.50" evidence="1"/>
<dbReference type="EMBL" id="CP000673">
    <property type="protein sequence ID" value="EDK33610.1"/>
    <property type="molecule type" value="Genomic_DNA"/>
</dbReference>
<dbReference type="SMR" id="A5N8H9"/>
<dbReference type="STRING" id="431943.CKL_1568"/>
<dbReference type="KEGG" id="ckl:CKL_1568"/>
<dbReference type="eggNOG" id="COG1586">
    <property type="taxonomic scope" value="Bacteria"/>
</dbReference>
<dbReference type="HOGENOM" id="CLU_125470_2_3_9"/>
<dbReference type="UniPathway" id="UPA00331">
    <property type="reaction ID" value="UER00451"/>
</dbReference>
<dbReference type="Proteomes" id="UP000002411">
    <property type="component" value="Chromosome"/>
</dbReference>
<dbReference type="GO" id="GO:0005829">
    <property type="term" value="C:cytosol"/>
    <property type="evidence" value="ECO:0007669"/>
    <property type="project" value="TreeGrafter"/>
</dbReference>
<dbReference type="GO" id="GO:0004014">
    <property type="term" value="F:adenosylmethionine decarboxylase activity"/>
    <property type="evidence" value="ECO:0007669"/>
    <property type="project" value="UniProtKB-UniRule"/>
</dbReference>
<dbReference type="GO" id="GO:0008295">
    <property type="term" value="P:spermidine biosynthetic process"/>
    <property type="evidence" value="ECO:0007669"/>
    <property type="project" value="UniProtKB-UniRule"/>
</dbReference>
<dbReference type="FunFam" id="3.30.360.110:FF:000001">
    <property type="entry name" value="S-adenosylmethionine decarboxylase proenzyme"/>
    <property type="match status" value="1"/>
</dbReference>
<dbReference type="Gene3D" id="3.30.160.750">
    <property type="match status" value="1"/>
</dbReference>
<dbReference type="Gene3D" id="3.30.360.110">
    <property type="entry name" value="S-adenosylmethionine decarboxylase domain"/>
    <property type="match status" value="1"/>
</dbReference>
<dbReference type="HAMAP" id="MF_00464">
    <property type="entry name" value="AdoMetDC_1"/>
    <property type="match status" value="1"/>
</dbReference>
<dbReference type="InterPro" id="IPR042286">
    <property type="entry name" value="AdoMetDC_C"/>
</dbReference>
<dbReference type="InterPro" id="IPR003826">
    <property type="entry name" value="AdoMetDC_fam_prok"/>
</dbReference>
<dbReference type="InterPro" id="IPR042284">
    <property type="entry name" value="AdoMetDC_N"/>
</dbReference>
<dbReference type="InterPro" id="IPR016067">
    <property type="entry name" value="S-AdoMet_deCO2ase_core"/>
</dbReference>
<dbReference type="InterPro" id="IPR017716">
    <property type="entry name" value="S-AdoMet_deCOase_pro-enz"/>
</dbReference>
<dbReference type="NCBIfam" id="TIGR03330">
    <property type="entry name" value="SAM_DCase_Bsu"/>
    <property type="match status" value="1"/>
</dbReference>
<dbReference type="PANTHER" id="PTHR33866">
    <property type="entry name" value="S-ADENOSYLMETHIONINE DECARBOXYLASE PROENZYME"/>
    <property type="match status" value="1"/>
</dbReference>
<dbReference type="PANTHER" id="PTHR33866:SF2">
    <property type="entry name" value="S-ADENOSYLMETHIONINE DECARBOXYLASE PROENZYME"/>
    <property type="match status" value="1"/>
</dbReference>
<dbReference type="Pfam" id="PF02675">
    <property type="entry name" value="AdoMet_dc"/>
    <property type="match status" value="1"/>
</dbReference>
<dbReference type="SUPFAM" id="SSF56276">
    <property type="entry name" value="S-adenosylmethionine decarboxylase"/>
    <property type="match status" value="1"/>
</dbReference>
<accession>A5N8H9</accession>
<comment type="function">
    <text evidence="1">Catalyzes the decarboxylation of S-adenosylmethionine to S-adenosylmethioninamine (dcAdoMet), the propylamine donor required for the synthesis of the polyamines spermine and spermidine from the diamine putrescine.</text>
</comment>
<comment type="catalytic activity">
    <reaction evidence="1">
        <text>S-adenosyl-L-methionine + H(+) = S-adenosyl 3-(methylsulfanyl)propylamine + CO2</text>
        <dbReference type="Rhea" id="RHEA:15981"/>
        <dbReference type="ChEBI" id="CHEBI:15378"/>
        <dbReference type="ChEBI" id="CHEBI:16526"/>
        <dbReference type="ChEBI" id="CHEBI:57443"/>
        <dbReference type="ChEBI" id="CHEBI:59789"/>
        <dbReference type="EC" id="4.1.1.50"/>
    </reaction>
</comment>
<comment type="cofactor">
    <cofactor evidence="1">
        <name>pyruvate</name>
        <dbReference type="ChEBI" id="CHEBI:15361"/>
    </cofactor>
    <text evidence="1">Binds 1 pyruvoyl group covalently per subunit.</text>
</comment>
<comment type="pathway">
    <text evidence="1">Amine and polyamine biosynthesis; S-adenosylmethioninamine biosynthesis; S-adenosylmethioninamine from S-adenosyl-L-methionine: step 1/1.</text>
</comment>
<comment type="subunit">
    <text evidence="1">Heterotetramer of two alpha and two beta chains arranged as a dimer of alpha/beta heterodimers.</text>
</comment>
<comment type="PTM">
    <text evidence="1">Is synthesized initially as an inactive proenzyme. Formation of the active enzyme involves a self-maturation process in which the active site pyruvoyl group is generated from an internal serine residue via an autocatalytic post-translational modification. Two non-identical subunits are generated from the proenzyme in this reaction, and the pyruvate is formed at the N-terminus of the alpha chain, which is derived from the carboxyl end of the proenzyme. The post-translation cleavage follows an unusual pathway, termed non-hydrolytic serinolysis, in which the side chain hydroxyl group of the serine supplies its oxygen atom to form the C-terminus of the beta chain, while the remainder of the serine residue undergoes an oxidative deamination to produce ammonia and the pyruvoyl group blocking the N-terminus of the alpha chain.</text>
</comment>
<comment type="similarity">
    <text evidence="1">Belongs to the prokaryotic AdoMetDC family. Type 1 subfamily.</text>
</comment>
<gene>
    <name evidence="1" type="primary">speH</name>
    <name type="ordered locus">CKL_1568</name>
</gene>
<sequence length="126" mass="14062">MNELGRHILAEIYGCDGEILNNKDFIEKIMVDSALKAGAEVREVAFHKFSPQGISGVVIISESHLTIHTWPELGYAAVDVFTCGDRINPWDACNYMTEKFNAKNMTATEIKRGIFEQVVEVKASNI</sequence>
<protein>
    <recommendedName>
        <fullName evidence="1">S-adenosylmethionine decarboxylase proenzyme</fullName>
        <shortName evidence="1">AdoMetDC</shortName>
        <shortName evidence="1">SAMDC</shortName>
        <ecNumber evidence="1">4.1.1.50</ecNumber>
    </recommendedName>
    <component>
        <recommendedName>
            <fullName evidence="1">S-adenosylmethionine decarboxylase beta chain</fullName>
        </recommendedName>
    </component>
    <component>
        <recommendedName>
            <fullName evidence="1">S-adenosylmethionine decarboxylase alpha chain</fullName>
        </recommendedName>
    </component>
</protein>
<feature type="chain" id="PRO_1000081170" description="S-adenosylmethionine decarboxylase beta chain" evidence="1">
    <location>
        <begin position="1"/>
        <end position="62"/>
    </location>
</feature>
<feature type="chain" id="PRO_1000081171" description="S-adenosylmethionine decarboxylase alpha chain" evidence="1">
    <location>
        <begin position="63"/>
        <end position="126"/>
    </location>
</feature>
<feature type="active site" description="Schiff-base intermediate with substrate; via pyruvic acid" evidence="1">
    <location>
        <position position="63"/>
    </location>
</feature>
<feature type="active site" description="Proton acceptor; for processing activity" evidence="1">
    <location>
        <position position="68"/>
    </location>
</feature>
<feature type="active site" description="Proton donor; for catalytic activity" evidence="1">
    <location>
        <position position="83"/>
    </location>
</feature>
<feature type="site" description="Cleavage (non-hydrolytic); by autolysis" evidence="1">
    <location>
        <begin position="62"/>
        <end position="63"/>
    </location>
</feature>
<feature type="modified residue" description="Pyruvic acid (Ser); by autocatalysis" evidence="1">
    <location>
        <position position="63"/>
    </location>
</feature>
<proteinExistence type="inferred from homology"/>
<evidence type="ECO:0000255" key="1">
    <source>
        <dbReference type="HAMAP-Rule" id="MF_00464"/>
    </source>
</evidence>
<name>SPEH_CLOK5</name>
<reference key="1">
    <citation type="journal article" date="2008" name="Proc. Natl. Acad. Sci. U.S.A.">
        <title>The genome of Clostridium kluyveri, a strict anaerobe with unique metabolic features.</title>
        <authorList>
            <person name="Seedorf H."/>
            <person name="Fricke W.F."/>
            <person name="Veith B."/>
            <person name="Brueggemann H."/>
            <person name="Liesegang H."/>
            <person name="Strittmatter A."/>
            <person name="Miethke M."/>
            <person name="Buckel W."/>
            <person name="Hinderberger J."/>
            <person name="Li F."/>
            <person name="Hagemeier C."/>
            <person name="Thauer R.K."/>
            <person name="Gottschalk G."/>
        </authorList>
    </citation>
    <scope>NUCLEOTIDE SEQUENCE [LARGE SCALE GENOMIC DNA]</scope>
    <source>
        <strain>ATCC 8527 / DSM 555 / NBRC 12016 / NCIMB 10680 / K1</strain>
    </source>
</reference>
<organism>
    <name type="scientific">Clostridium kluyveri (strain ATCC 8527 / DSM 555 / NBRC 12016 / NCIMB 10680 / K1)</name>
    <dbReference type="NCBI Taxonomy" id="431943"/>
    <lineage>
        <taxon>Bacteria</taxon>
        <taxon>Bacillati</taxon>
        <taxon>Bacillota</taxon>
        <taxon>Clostridia</taxon>
        <taxon>Eubacteriales</taxon>
        <taxon>Clostridiaceae</taxon>
        <taxon>Clostridium</taxon>
    </lineage>
</organism>